<protein>
    <recommendedName>
        <fullName evidence="1">L-threonine 3-dehydrogenase</fullName>
        <shortName evidence="1">TDH</shortName>
        <ecNumber evidence="1">1.1.1.103</ecNumber>
    </recommendedName>
</protein>
<comment type="function">
    <text evidence="1">Catalyzes the NAD(+)-dependent oxidation of L-threonine to 2-amino-3-ketobutyrate.</text>
</comment>
<comment type="catalytic activity">
    <reaction evidence="1">
        <text>L-threonine + NAD(+) = (2S)-2-amino-3-oxobutanoate + NADH + H(+)</text>
        <dbReference type="Rhea" id="RHEA:13161"/>
        <dbReference type="ChEBI" id="CHEBI:15378"/>
        <dbReference type="ChEBI" id="CHEBI:57540"/>
        <dbReference type="ChEBI" id="CHEBI:57926"/>
        <dbReference type="ChEBI" id="CHEBI:57945"/>
        <dbReference type="ChEBI" id="CHEBI:78948"/>
        <dbReference type="EC" id="1.1.1.103"/>
    </reaction>
</comment>
<comment type="cofactor">
    <cofactor evidence="1">
        <name>Zn(2+)</name>
        <dbReference type="ChEBI" id="CHEBI:29105"/>
    </cofactor>
    <text evidence="1">Binds 2 Zn(2+) ions per subunit.</text>
</comment>
<comment type="pathway">
    <text evidence="1">Amino-acid degradation; L-threonine degradation via oxydo-reductase pathway; glycine from L-threonine: step 1/2.</text>
</comment>
<comment type="subunit">
    <text evidence="1">Homotetramer.</text>
</comment>
<comment type="subcellular location">
    <subcellularLocation>
        <location evidence="1">Cytoplasm</location>
    </subcellularLocation>
</comment>
<comment type="similarity">
    <text evidence="1">Belongs to the zinc-containing alcohol dehydrogenase family.</text>
</comment>
<sequence>MKALAKLRPEEGIWMVDSPTPELGHNDIMIKIRKSAICGTDVHIYNWDEWSQKTIPVPMVVGHEYVGEIVAIGQEVNGFHIGDRVSGEGHITCGYCRNCRAGRRHLCRNAIGVGVNRPGSFAEYLVIPAYNAFRIPDNISDELAAIFDPFGNAVHTALSFDLVGEDVLIAGAGPIGMMAAAVCRHVGARNVVITDVNAYRLDLARKMGATRAVNVAEERLADVMIELGMTEGFDIGLEMSGAPSAFRAMLKAMNHGGRIAMLGIPHEPMSIDWGEVIFKGLFIKGIYGREMFETWYKMSALIQSGLDLSPIITHRFHIDEFQKGFDAMRSGQSGKVILNWDER</sequence>
<proteinExistence type="inferred from homology"/>
<reference key="1">
    <citation type="submission" date="2009-07" db="EMBL/GenBank/DDBJ databases">
        <title>Complete sequence of Pectobacterium carotovorum subsp. carotovorum PC1.</title>
        <authorList>
            <consortium name="US DOE Joint Genome Institute"/>
            <person name="Lucas S."/>
            <person name="Copeland A."/>
            <person name="Lapidus A."/>
            <person name="Glavina del Rio T."/>
            <person name="Tice H."/>
            <person name="Bruce D."/>
            <person name="Goodwin L."/>
            <person name="Pitluck S."/>
            <person name="Munk A.C."/>
            <person name="Brettin T."/>
            <person name="Detter J.C."/>
            <person name="Han C."/>
            <person name="Tapia R."/>
            <person name="Larimer F."/>
            <person name="Land M."/>
            <person name="Hauser L."/>
            <person name="Kyrpides N."/>
            <person name="Mikhailova N."/>
            <person name="Balakrishnan V."/>
            <person name="Glasner J."/>
            <person name="Perna N.T."/>
        </authorList>
    </citation>
    <scope>NUCLEOTIDE SEQUENCE [LARGE SCALE GENOMIC DNA]</scope>
    <source>
        <strain>PC1</strain>
    </source>
</reference>
<organism>
    <name type="scientific">Pectobacterium carotovorum subsp. carotovorum (strain PC1)</name>
    <dbReference type="NCBI Taxonomy" id="561230"/>
    <lineage>
        <taxon>Bacteria</taxon>
        <taxon>Pseudomonadati</taxon>
        <taxon>Pseudomonadota</taxon>
        <taxon>Gammaproteobacteria</taxon>
        <taxon>Enterobacterales</taxon>
        <taxon>Pectobacteriaceae</taxon>
        <taxon>Pectobacterium</taxon>
    </lineage>
</organism>
<gene>
    <name evidence="1" type="primary">tdh</name>
    <name type="ordered locus">PC1_4086</name>
</gene>
<keyword id="KW-0963">Cytoplasm</keyword>
<keyword id="KW-0479">Metal-binding</keyword>
<keyword id="KW-0520">NAD</keyword>
<keyword id="KW-0560">Oxidoreductase</keyword>
<keyword id="KW-0862">Zinc</keyword>
<name>TDH_PECCP</name>
<dbReference type="EC" id="1.1.1.103" evidence="1"/>
<dbReference type="EMBL" id="CP001657">
    <property type="protein sequence ID" value="ACT15101.1"/>
    <property type="molecule type" value="Genomic_DNA"/>
</dbReference>
<dbReference type="RefSeq" id="WP_015842177.1">
    <property type="nucleotide sequence ID" value="NC_012917.1"/>
</dbReference>
<dbReference type="SMR" id="C6DIA7"/>
<dbReference type="STRING" id="561230.PC1_4086"/>
<dbReference type="KEGG" id="pct:PC1_4086"/>
<dbReference type="eggNOG" id="COG1063">
    <property type="taxonomic scope" value="Bacteria"/>
</dbReference>
<dbReference type="HOGENOM" id="CLU_026673_11_0_6"/>
<dbReference type="OrthoDB" id="9773078at2"/>
<dbReference type="UniPathway" id="UPA00046">
    <property type="reaction ID" value="UER00505"/>
</dbReference>
<dbReference type="Proteomes" id="UP000002736">
    <property type="component" value="Chromosome"/>
</dbReference>
<dbReference type="GO" id="GO:0005737">
    <property type="term" value="C:cytoplasm"/>
    <property type="evidence" value="ECO:0007669"/>
    <property type="project" value="UniProtKB-SubCell"/>
</dbReference>
<dbReference type="GO" id="GO:0008743">
    <property type="term" value="F:L-threonine 3-dehydrogenase activity"/>
    <property type="evidence" value="ECO:0007669"/>
    <property type="project" value="UniProtKB-UniRule"/>
</dbReference>
<dbReference type="GO" id="GO:0008270">
    <property type="term" value="F:zinc ion binding"/>
    <property type="evidence" value="ECO:0007669"/>
    <property type="project" value="UniProtKB-UniRule"/>
</dbReference>
<dbReference type="GO" id="GO:0019518">
    <property type="term" value="P:L-threonine catabolic process to glycine"/>
    <property type="evidence" value="ECO:0007669"/>
    <property type="project" value="UniProtKB-UniPathway"/>
</dbReference>
<dbReference type="Gene3D" id="3.90.180.10">
    <property type="entry name" value="Medium-chain alcohol dehydrogenases, catalytic domain"/>
    <property type="match status" value="1"/>
</dbReference>
<dbReference type="Gene3D" id="3.40.50.720">
    <property type="entry name" value="NAD(P)-binding Rossmann-like Domain"/>
    <property type="match status" value="1"/>
</dbReference>
<dbReference type="HAMAP" id="MF_00627">
    <property type="entry name" value="Thr_dehydrog"/>
    <property type="match status" value="1"/>
</dbReference>
<dbReference type="InterPro" id="IPR013149">
    <property type="entry name" value="ADH-like_C"/>
</dbReference>
<dbReference type="InterPro" id="IPR013154">
    <property type="entry name" value="ADH-like_N"/>
</dbReference>
<dbReference type="InterPro" id="IPR002328">
    <property type="entry name" value="ADH_Zn_CS"/>
</dbReference>
<dbReference type="InterPro" id="IPR011032">
    <property type="entry name" value="GroES-like_sf"/>
</dbReference>
<dbReference type="InterPro" id="IPR004627">
    <property type="entry name" value="L-Threonine_3-DHase"/>
</dbReference>
<dbReference type="InterPro" id="IPR036291">
    <property type="entry name" value="NAD(P)-bd_dom_sf"/>
</dbReference>
<dbReference type="InterPro" id="IPR020843">
    <property type="entry name" value="PKS_ER"/>
</dbReference>
<dbReference type="InterPro" id="IPR050129">
    <property type="entry name" value="Zn_alcohol_dh"/>
</dbReference>
<dbReference type="NCBIfam" id="NF003808">
    <property type="entry name" value="PRK05396.1"/>
    <property type="match status" value="1"/>
</dbReference>
<dbReference type="NCBIfam" id="TIGR00692">
    <property type="entry name" value="tdh"/>
    <property type="match status" value="1"/>
</dbReference>
<dbReference type="PANTHER" id="PTHR43401">
    <property type="entry name" value="L-THREONINE 3-DEHYDROGENASE"/>
    <property type="match status" value="1"/>
</dbReference>
<dbReference type="PANTHER" id="PTHR43401:SF2">
    <property type="entry name" value="L-THREONINE 3-DEHYDROGENASE"/>
    <property type="match status" value="1"/>
</dbReference>
<dbReference type="Pfam" id="PF08240">
    <property type="entry name" value="ADH_N"/>
    <property type="match status" value="1"/>
</dbReference>
<dbReference type="Pfam" id="PF00107">
    <property type="entry name" value="ADH_zinc_N"/>
    <property type="match status" value="1"/>
</dbReference>
<dbReference type="SMART" id="SM00829">
    <property type="entry name" value="PKS_ER"/>
    <property type="match status" value="1"/>
</dbReference>
<dbReference type="SUPFAM" id="SSF50129">
    <property type="entry name" value="GroES-like"/>
    <property type="match status" value="1"/>
</dbReference>
<dbReference type="SUPFAM" id="SSF51735">
    <property type="entry name" value="NAD(P)-binding Rossmann-fold domains"/>
    <property type="match status" value="1"/>
</dbReference>
<dbReference type="PROSITE" id="PS00059">
    <property type="entry name" value="ADH_ZINC"/>
    <property type="match status" value="1"/>
</dbReference>
<accession>C6DIA7</accession>
<evidence type="ECO:0000255" key="1">
    <source>
        <dbReference type="HAMAP-Rule" id="MF_00627"/>
    </source>
</evidence>
<feature type="chain" id="PRO_1000212313" description="L-threonine 3-dehydrogenase">
    <location>
        <begin position="1"/>
        <end position="343"/>
    </location>
</feature>
<feature type="active site" description="Charge relay system" evidence="1">
    <location>
        <position position="40"/>
    </location>
</feature>
<feature type="active site" description="Charge relay system" evidence="1">
    <location>
        <position position="43"/>
    </location>
</feature>
<feature type="binding site" evidence="1">
    <location>
        <position position="38"/>
    </location>
    <ligand>
        <name>Zn(2+)</name>
        <dbReference type="ChEBI" id="CHEBI:29105"/>
        <label>1</label>
        <note>catalytic</note>
    </ligand>
</feature>
<feature type="binding site" evidence="1">
    <location>
        <position position="63"/>
    </location>
    <ligand>
        <name>Zn(2+)</name>
        <dbReference type="ChEBI" id="CHEBI:29105"/>
        <label>1</label>
        <note>catalytic</note>
    </ligand>
</feature>
<feature type="binding site" evidence="1">
    <location>
        <position position="64"/>
    </location>
    <ligand>
        <name>Zn(2+)</name>
        <dbReference type="ChEBI" id="CHEBI:29105"/>
        <label>1</label>
        <note>catalytic</note>
    </ligand>
</feature>
<feature type="binding site" evidence="1">
    <location>
        <position position="93"/>
    </location>
    <ligand>
        <name>Zn(2+)</name>
        <dbReference type="ChEBI" id="CHEBI:29105"/>
        <label>2</label>
    </ligand>
</feature>
<feature type="binding site" evidence="1">
    <location>
        <position position="96"/>
    </location>
    <ligand>
        <name>Zn(2+)</name>
        <dbReference type="ChEBI" id="CHEBI:29105"/>
        <label>2</label>
    </ligand>
</feature>
<feature type="binding site" evidence="1">
    <location>
        <position position="99"/>
    </location>
    <ligand>
        <name>Zn(2+)</name>
        <dbReference type="ChEBI" id="CHEBI:29105"/>
        <label>2</label>
    </ligand>
</feature>
<feature type="binding site" evidence="1">
    <location>
        <position position="107"/>
    </location>
    <ligand>
        <name>Zn(2+)</name>
        <dbReference type="ChEBI" id="CHEBI:29105"/>
        <label>2</label>
    </ligand>
</feature>
<feature type="binding site" evidence="1">
    <location>
        <position position="175"/>
    </location>
    <ligand>
        <name>NAD(+)</name>
        <dbReference type="ChEBI" id="CHEBI:57540"/>
    </ligand>
</feature>
<feature type="binding site" evidence="1">
    <location>
        <position position="195"/>
    </location>
    <ligand>
        <name>NAD(+)</name>
        <dbReference type="ChEBI" id="CHEBI:57540"/>
    </ligand>
</feature>
<feature type="binding site" evidence="1">
    <location>
        <position position="200"/>
    </location>
    <ligand>
        <name>NAD(+)</name>
        <dbReference type="ChEBI" id="CHEBI:57540"/>
    </ligand>
</feature>
<feature type="binding site" evidence="1">
    <location>
        <begin position="262"/>
        <end position="264"/>
    </location>
    <ligand>
        <name>NAD(+)</name>
        <dbReference type="ChEBI" id="CHEBI:57540"/>
    </ligand>
</feature>
<feature type="binding site" evidence="1">
    <location>
        <begin position="286"/>
        <end position="287"/>
    </location>
    <ligand>
        <name>NAD(+)</name>
        <dbReference type="ChEBI" id="CHEBI:57540"/>
    </ligand>
</feature>
<feature type="site" description="Important for catalytic activity for the proton relay mechanism but does not participate directly in the coordination of zinc atom" evidence="1">
    <location>
        <position position="148"/>
    </location>
</feature>